<sequence length="462" mass="51661">MAPLLQLLWLLTLLSTVALSPVPAKPWADDEQAWNLSSQELLAPARFALDMYNYGRAAGTRAVLGAVRGRVRRAGQGSLFSLEATLEEPPCNDPLVCPLPETKKTVLCSFEVLEELKEHLLLRRDCSPVNAKVTEFRNATFSSFLPLLDKDPLPQDFSVKMAPLFKDFMTTYNRTYESREEAQWRLTVFARNMIRAQKIQALDRGTAQYGITKFSDLTEEEFHTIYLNPLLQKESGRKMSPAKSINDLAPPEWDWRKKGAVTEVKNQGMCGSCWAFSVTGNVEGQWFLNRGTLLSLSEQELLDCDKVDKACLGGLPSNAYAAIKNLGGLETEDDYGYQGHVQTCNFSAQMAKVYINDSVELSRNENKIAAWLAQKGPISVAINAFGMQFYRHGIAHPFRPLCSPWFIDHAVLLVGYGNRSNIPYWAIKNSWGSDWGEEGYYYLYRGSGACGVNTMASSAVVN</sequence>
<name>CATF_MOUSE</name>
<proteinExistence type="evidence at protein level"/>
<gene>
    <name type="primary">Ctsf</name>
</gene>
<dbReference type="EC" id="3.4.22.41"/>
<dbReference type="EMBL" id="AF136280">
    <property type="protein sequence ID" value="AAF13147.1"/>
    <property type="molecule type" value="mRNA"/>
</dbReference>
<dbReference type="EMBL" id="AF217224">
    <property type="protein sequence ID" value="AAF37228.1"/>
    <property type="molecule type" value="Genomic_DNA"/>
</dbReference>
<dbReference type="EMBL" id="AJ131851">
    <property type="protein sequence ID" value="CAB42884.1"/>
    <property type="molecule type" value="mRNA"/>
</dbReference>
<dbReference type="EMBL" id="AK075862">
    <property type="protein sequence ID" value="BAC36013.1"/>
    <property type="molecule type" value="mRNA"/>
</dbReference>
<dbReference type="EMBL" id="BC058758">
    <property type="protein sequence ID" value="AAH58758.1"/>
    <property type="molecule type" value="mRNA"/>
</dbReference>
<dbReference type="CCDS" id="CCDS29440.1"/>
<dbReference type="RefSeq" id="NP_063914.1">
    <property type="nucleotide sequence ID" value="NM_019861.2"/>
</dbReference>
<dbReference type="SMR" id="Q9R013"/>
<dbReference type="FunCoup" id="Q9R013">
    <property type="interactions" value="323"/>
</dbReference>
<dbReference type="STRING" id="10090.ENSMUSP00000112481"/>
<dbReference type="MEROPS" id="C01.018"/>
<dbReference type="GlyConnect" id="2191">
    <property type="glycosylation" value="4 N-Linked glycans (2 sites)"/>
</dbReference>
<dbReference type="GlyCosmos" id="Q9R013">
    <property type="glycosylation" value="6 sites, 4 glycans"/>
</dbReference>
<dbReference type="GlyGen" id="Q9R013">
    <property type="glycosylation" value="6 sites, 9 N-linked glycans (5 sites)"/>
</dbReference>
<dbReference type="iPTMnet" id="Q9R013"/>
<dbReference type="PhosphoSitePlus" id="Q9R013"/>
<dbReference type="SwissPalm" id="Q9R013"/>
<dbReference type="jPOST" id="Q9R013"/>
<dbReference type="PaxDb" id="10090-ENSMUSP00000112481"/>
<dbReference type="PeptideAtlas" id="Q9R013"/>
<dbReference type="ProteomicsDB" id="265540"/>
<dbReference type="Antibodypedia" id="30202">
    <property type="antibodies" value="284 antibodies from 33 providers"/>
</dbReference>
<dbReference type="DNASU" id="56464"/>
<dbReference type="Ensembl" id="ENSMUST00000119694.3">
    <property type="protein sequence ID" value="ENSMUSP00000112481.2"/>
    <property type="gene ID" value="ENSMUSG00000083282.4"/>
</dbReference>
<dbReference type="GeneID" id="56464"/>
<dbReference type="KEGG" id="mmu:56464"/>
<dbReference type="UCSC" id="uc008gbc.1">
    <property type="organism name" value="mouse"/>
</dbReference>
<dbReference type="AGR" id="MGI:1861434"/>
<dbReference type="CTD" id="8722"/>
<dbReference type="MGI" id="MGI:1861434">
    <property type="gene designation" value="Ctsf"/>
</dbReference>
<dbReference type="VEuPathDB" id="HostDB:ENSMUSG00000083282"/>
<dbReference type="eggNOG" id="KOG1542">
    <property type="taxonomic scope" value="Eukaryota"/>
</dbReference>
<dbReference type="GeneTree" id="ENSGT00940000162141"/>
<dbReference type="HOGENOM" id="CLU_012184_10_0_1"/>
<dbReference type="InParanoid" id="Q9R013"/>
<dbReference type="OMA" id="RSATPFW"/>
<dbReference type="OrthoDB" id="387093at2759"/>
<dbReference type="PhylomeDB" id="Q9R013"/>
<dbReference type="TreeFam" id="TF314550"/>
<dbReference type="Reactome" id="R-MMU-2132295">
    <property type="pathway name" value="MHC class II antigen presentation"/>
</dbReference>
<dbReference type="BioGRID-ORCS" id="56464">
    <property type="hits" value="1 hit in 78 CRISPR screens"/>
</dbReference>
<dbReference type="ChiTaRS" id="Ctsf">
    <property type="organism name" value="mouse"/>
</dbReference>
<dbReference type="PRO" id="PR:Q9R013"/>
<dbReference type="Proteomes" id="UP000000589">
    <property type="component" value="Chromosome 19"/>
</dbReference>
<dbReference type="RNAct" id="Q9R013">
    <property type="molecule type" value="protein"/>
</dbReference>
<dbReference type="Bgee" id="ENSMUSG00000083282">
    <property type="expression patterns" value="Expressed in retinal neural layer and 221 other cell types or tissues"/>
</dbReference>
<dbReference type="ExpressionAtlas" id="Q9R013">
    <property type="expression patterns" value="baseline and differential"/>
</dbReference>
<dbReference type="GO" id="GO:0005783">
    <property type="term" value="C:endoplasmic reticulum"/>
    <property type="evidence" value="ECO:0007669"/>
    <property type="project" value="Ensembl"/>
</dbReference>
<dbReference type="GO" id="GO:0005764">
    <property type="term" value="C:lysosome"/>
    <property type="evidence" value="ECO:0007669"/>
    <property type="project" value="UniProtKB-SubCell"/>
</dbReference>
<dbReference type="GO" id="GO:0005886">
    <property type="term" value="C:plasma membrane"/>
    <property type="evidence" value="ECO:0007669"/>
    <property type="project" value="Ensembl"/>
</dbReference>
<dbReference type="GO" id="GO:0004197">
    <property type="term" value="F:cysteine-type endopeptidase activity"/>
    <property type="evidence" value="ECO:0007669"/>
    <property type="project" value="UniProtKB-EC"/>
</dbReference>
<dbReference type="GO" id="GO:0008234">
    <property type="term" value="F:cysteine-type peptidase activity"/>
    <property type="evidence" value="ECO:0000250"/>
    <property type="project" value="MGI"/>
</dbReference>
<dbReference type="GO" id="GO:0006508">
    <property type="term" value="P:proteolysis"/>
    <property type="evidence" value="ECO:0007669"/>
    <property type="project" value="UniProtKB-KW"/>
</dbReference>
<dbReference type="CDD" id="cd02248">
    <property type="entry name" value="Peptidase_C1A"/>
    <property type="match status" value="1"/>
</dbReference>
<dbReference type="FunFam" id="1.10.287.2250:FF:000001">
    <property type="entry name" value="Cathepsin F"/>
    <property type="match status" value="1"/>
</dbReference>
<dbReference type="FunFam" id="3.90.70.10:FF:000050">
    <property type="entry name" value="Cathepsin F"/>
    <property type="match status" value="1"/>
</dbReference>
<dbReference type="Gene3D" id="1.10.287.2250">
    <property type="match status" value="1"/>
</dbReference>
<dbReference type="Gene3D" id="3.90.70.10">
    <property type="entry name" value="Cysteine proteinases"/>
    <property type="match status" value="1"/>
</dbReference>
<dbReference type="InterPro" id="IPR038765">
    <property type="entry name" value="Papain-like_cys_pep_sf"/>
</dbReference>
<dbReference type="InterPro" id="IPR000169">
    <property type="entry name" value="Pept_cys_AS"/>
</dbReference>
<dbReference type="InterPro" id="IPR025660">
    <property type="entry name" value="Pept_his_AS"/>
</dbReference>
<dbReference type="InterPro" id="IPR013128">
    <property type="entry name" value="Peptidase_C1A"/>
</dbReference>
<dbReference type="InterPro" id="IPR000668">
    <property type="entry name" value="Peptidase_C1A_C"/>
</dbReference>
<dbReference type="InterPro" id="IPR039417">
    <property type="entry name" value="Peptidase_C1A_papain-like"/>
</dbReference>
<dbReference type="InterPro" id="IPR013201">
    <property type="entry name" value="Prot_inhib_I29"/>
</dbReference>
<dbReference type="PANTHER" id="PTHR12411">
    <property type="entry name" value="CYSTEINE PROTEASE FAMILY C1-RELATED"/>
    <property type="match status" value="1"/>
</dbReference>
<dbReference type="Pfam" id="PF08246">
    <property type="entry name" value="Inhibitor_I29"/>
    <property type="match status" value="1"/>
</dbReference>
<dbReference type="Pfam" id="PF00112">
    <property type="entry name" value="Peptidase_C1"/>
    <property type="match status" value="1"/>
</dbReference>
<dbReference type="PRINTS" id="PR00705">
    <property type="entry name" value="PAPAIN"/>
</dbReference>
<dbReference type="SMART" id="SM00848">
    <property type="entry name" value="Inhibitor_I29"/>
    <property type="match status" value="1"/>
</dbReference>
<dbReference type="SMART" id="SM00645">
    <property type="entry name" value="Pept_C1"/>
    <property type="match status" value="1"/>
</dbReference>
<dbReference type="SUPFAM" id="SSF54001">
    <property type="entry name" value="Cysteine proteinases"/>
    <property type="match status" value="1"/>
</dbReference>
<dbReference type="PROSITE" id="PS00139">
    <property type="entry name" value="THIOL_PROTEASE_CYS"/>
    <property type="match status" value="1"/>
</dbReference>
<dbReference type="PROSITE" id="PS00639">
    <property type="entry name" value="THIOL_PROTEASE_HIS"/>
    <property type="match status" value="1"/>
</dbReference>
<keyword id="KW-1015">Disulfide bond</keyword>
<keyword id="KW-0325">Glycoprotein</keyword>
<keyword id="KW-0378">Hydrolase</keyword>
<keyword id="KW-0458">Lysosome</keyword>
<keyword id="KW-0645">Protease</keyword>
<keyword id="KW-1185">Reference proteome</keyword>
<keyword id="KW-0732">Signal</keyword>
<keyword id="KW-0788">Thiol protease</keyword>
<keyword id="KW-0865">Zymogen</keyword>
<feature type="signal peptide" evidence="2">
    <location>
        <begin position="1"/>
        <end position="19"/>
    </location>
</feature>
<feature type="propeptide" id="PRO_0000026204" description="Activation peptide">
    <location>
        <begin position="20"/>
        <end position="248"/>
    </location>
</feature>
<feature type="chain" id="PRO_0000026205" description="Cathepsin F">
    <location>
        <begin position="249"/>
        <end position="462"/>
    </location>
</feature>
<feature type="active site" evidence="1">
    <location>
        <position position="273"/>
    </location>
</feature>
<feature type="active site" evidence="1">
    <location>
        <position position="409"/>
    </location>
</feature>
<feature type="active site" evidence="1">
    <location>
        <position position="429"/>
    </location>
</feature>
<feature type="glycosylation site" description="N-linked (GlcNAc...) asparagine" evidence="2">
    <location>
        <position position="35"/>
    </location>
</feature>
<feature type="glycosylation site" description="N-linked (GlcNAc...) asparagine" evidence="2">
    <location>
        <position position="138"/>
    </location>
</feature>
<feature type="glycosylation site" description="N-linked (GlcNAc...) asparagine" evidence="2">
    <location>
        <position position="173"/>
    </location>
</feature>
<feature type="glycosylation site" description="N-linked (GlcNAc...) asparagine" evidence="2">
    <location>
        <position position="345"/>
    </location>
</feature>
<feature type="glycosylation site" description="N-linked (GlcNAc...) asparagine" evidence="2">
    <location>
        <position position="356"/>
    </location>
</feature>
<feature type="glycosylation site" description="N-linked (GlcNAc...) asparagine" evidence="2">
    <location>
        <position position="418"/>
    </location>
</feature>
<feature type="disulfide bond" evidence="1">
    <location>
        <begin position="270"/>
        <end position="311"/>
    </location>
</feature>
<feature type="disulfide bond" evidence="1">
    <location>
        <begin position="304"/>
        <end position="344"/>
    </location>
</feature>
<feature type="disulfide bond" evidence="1">
    <location>
        <begin position="402"/>
        <end position="450"/>
    </location>
</feature>
<feature type="sequence conflict" description="In Ref. 2; CAB42884." evidence="5" ref="2">
    <original>P</original>
    <variation>L</variation>
    <location>
        <position position="3"/>
    </location>
</feature>
<reference key="1">
    <citation type="journal article" date="2000" name="Gene">
        <title>Mouse cathepsin F: cDNA cloning, genomic organization and chromosomal assignment of the gene.</title>
        <authorList>
            <person name="Deussing J."/>
            <person name="Tisljar K."/>
            <person name="Papazoglou A."/>
            <person name="Peters C."/>
        </authorList>
    </citation>
    <scope>NUCLEOTIDE SEQUENCE [GENOMIC DNA]</scope>
    <source>
        <strain>129/Ola</strain>
        <strain>C57BL/6J</strain>
        <tissue>Mammary gland</tissue>
    </source>
</reference>
<reference key="2">
    <citation type="journal article" date="1999" name="J. Biol. Chem.">
        <title>Molecular cloning and structural and functional characterization of human cathepsin F, a new cysteine proteinase of the papain family with a long propeptide domain.</title>
        <authorList>
            <person name="Santamaria I."/>
            <person name="Velasco G."/>
            <person name="Pendas A.M."/>
            <person name="Paz A."/>
            <person name="Lopez-Otin C."/>
        </authorList>
    </citation>
    <scope>NUCLEOTIDE SEQUENCE [MRNA]</scope>
    <source>
        <tissue>Brain</tissue>
    </source>
</reference>
<reference key="3">
    <citation type="journal article" date="2005" name="Science">
        <title>The transcriptional landscape of the mammalian genome.</title>
        <authorList>
            <person name="Carninci P."/>
            <person name="Kasukawa T."/>
            <person name="Katayama S."/>
            <person name="Gough J."/>
            <person name="Frith M.C."/>
            <person name="Maeda N."/>
            <person name="Oyama R."/>
            <person name="Ravasi T."/>
            <person name="Lenhard B."/>
            <person name="Wells C."/>
            <person name="Kodzius R."/>
            <person name="Shimokawa K."/>
            <person name="Bajic V.B."/>
            <person name="Brenner S.E."/>
            <person name="Batalov S."/>
            <person name="Forrest A.R."/>
            <person name="Zavolan M."/>
            <person name="Davis M.J."/>
            <person name="Wilming L.G."/>
            <person name="Aidinis V."/>
            <person name="Allen J.E."/>
            <person name="Ambesi-Impiombato A."/>
            <person name="Apweiler R."/>
            <person name="Aturaliya R.N."/>
            <person name="Bailey T.L."/>
            <person name="Bansal M."/>
            <person name="Baxter L."/>
            <person name="Beisel K.W."/>
            <person name="Bersano T."/>
            <person name="Bono H."/>
            <person name="Chalk A.M."/>
            <person name="Chiu K.P."/>
            <person name="Choudhary V."/>
            <person name="Christoffels A."/>
            <person name="Clutterbuck D.R."/>
            <person name="Crowe M.L."/>
            <person name="Dalla E."/>
            <person name="Dalrymple B.P."/>
            <person name="de Bono B."/>
            <person name="Della Gatta G."/>
            <person name="di Bernardo D."/>
            <person name="Down T."/>
            <person name="Engstrom P."/>
            <person name="Fagiolini M."/>
            <person name="Faulkner G."/>
            <person name="Fletcher C.F."/>
            <person name="Fukushima T."/>
            <person name="Furuno M."/>
            <person name="Futaki S."/>
            <person name="Gariboldi M."/>
            <person name="Georgii-Hemming P."/>
            <person name="Gingeras T.R."/>
            <person name="Gojobori T."/>
            <person name="Green R.E."/>
            <person name="Gustincich S."/>
            <person name="Harbers M."/>
            <person name="Hayashi Y."/>
            <person name="Hensch T.K."/>
            <person name="Hirokawa N."/>
            <person name="Hill D."/>
            <person name="Huminiecki L."/>
            <person name="Iacono M."/>
            <person name="Ikeo K."/>
            <person name="Iwama A."/>
            <person name="Ishikawa T."/>
            <person name="Jakt M."/>
            <person name="Kanapin A."/>
            <person name="Katoh M."/>
            <person name="Kawasawa Y."/>
            <person name="Kelso J."/>
            <person name="Kitamura H."/>
            <person name="Kitano H."/>
            <person name="Kollias G."/>
            <person name="Krishnan S.P."/>
            <person name="Kruger A."/>
            <person name="Kummerfeld S.K."/>
            <person name="Kurochkin I.V."/>
            <person name="Lareau L.F."/>
            <person name="Lazarevic D."/>
            <person name="Lipovich L."/>
            <person name="Liu J."/>
            <person name="Liuni S."/>
            <person name="McWilliam S."/>
            <person name="Madan Babu M."/>
            <person name="Madera M."/>
            <person name="Marchionni L."/>
            <person name="Matsuda H."/>
            <person name="Matsuzawa S."/>
            <person name="Miki H."/>
            <person name="Mignone F."/>
            <person name="Miyake S."/>
            <person name="Morris K."/>
            <person name="Mottagui-Tabar S."/>
            <person name="Mulder N."/>
            <person name="Nakano N."/>
            <person name="Nakauchi H."/>
            <person name="Ng P."/>
            <person name="Nilsson R."/>
            <person name="Nishiguchi S."/>
            <person name="Nishikawa S."/>
            <person name="Nori F."/>
            <person name="Ohara O."/>
            <person name="Okazaki Y."/>
            <person name="Orlando V."/>
            <person name="Pang K.C."/>
            <person name="Pavan W.J."/>
            <person name="Pavesi G."/>
            <person name="Pesole G."/>
            <person name="Petrovsky N."/>
            <person name="Piazza S."/>
            <person name="Reed J."/>
            <person name="Reid J.F."/>
            <person name="Ring B.Z."/>
            <person name="Ringwald M."/>
            <person name="Rost B."/>
            <person name="Ruan Y."/>
            <person name="Salzberg S.L."/>
            <person name="Sandelin A."/>
            <person name="Schneider C."/>
            <person name="Schoenbach C."/>
            <person name="Sekiguchi K."/>
            <person name="Semple C.A."/>
            <person name="Seno S."/>
            <person name="Sessa L."/>
            <person name="Sheng Y."/>
            <person name="Shibata Y."/>
            <person name="Shimada H."/>
            <person name="Shimada K."/>
            <person name="Silva D."/>
            <person name="Sinclair B."/>
            <person name="Sperling S."/>
            <person name="Stupka E."/>
            <person name="Sugiura K."/>
            <person name="Sultana R."/>
            <person name="Takenaka Y."/>
            <person name="Taki K."/>
            <person name="Tammoja K."/>
            <person name="Tan S.L."/>
            <person name="Tang S."/>
            <person name="Taylor M.S."/>
            <person name="Tegner J."/>
            <person name="Teichmann S.A."/>
            <person name="Ueda H.R."/>
            <person name="van Nimwegen E."/>
            <person name="Verardo R."/>
            <person name="Wei C.L."/>
            <person name="Yagi K."/>
            <person name="Yamanishi H."/>
            <person name="Zabarovsky E."/>
            <person name="Zhu S."/>
            <person name="Zimmer A."/>
            <person name="Hide W."/>
            <person name="Bult C."/>
            <person name="Grimmond S.M."/>
            <person name="Teasdale R.D."/>
            <person name="Liu E.T."/>
            <person name="Brusic V."/>
            <person name="Quackenbush J."/>
            <person name="Wahlestedt C."/>
            <person name="Mattick J.S."/>
            <person name="Hume D.A."/>
            <person name="Kai C."/>
            <person name="Sasaki D."/>
            <person name="Tomaru Y."/>
            <person name="Fukuda S."/>
            <person name="Kanamori-Katayama M."/>
            <person name="Suzuki M."/>
            <person name="Aoki J."/>
            <person name="Arakawa T."/>
            <person name="Iida J."/>
            <person name="Imamura K."/>
            <person name="Itoh M."/>
            <person name="Kato T."/>
            <person name="Kawaji H."/>
            <person name="Kawagashira N."/>
            <person name="Kawashima T."/>
            <person name="Kojima M."/>
            <person name="Kondo S."/>
            <person name="Konno H."/>
            <person name="Nakano K."/>
            <person name="Ninomiya N."/>
            <person name="Nishio T."/>
            <person name="Okada M."/>
            <person name="Plessy C."/>
            <person name="Shibata K."/>
            <person name="Shiraki T."/>
            <person name="Suzuki S."/>
            <person name="Tagami M."/>
            <person name="Waki K."/>
            <person name="Watahiki A."/>
            <person name="Okamura-Oho Y."/>
            <person name="Suzuki H."/>
            <person name="Kawai J."/>
            <person name="Hayashizaki Y."/>
        </authorList>
    </citation>
    <scope>NUCLEOTIDE SEQUENCE [LARGE SCALE MRNA]</scope>
    <source>
        <strain>C57BL/6J</strain>
        <tissue>Tongue</tissue>
    </source>
</reference>
<reference key="4">
    <citation type="journal article" date="2004" name="Genome Res.">
        <title>The status, quality, and expansion of the NIH full-length cDNA project: the Mammalian Gene Collection (MGC).</title>
        <authorList>
            <consortium name="The MGC Project Team"/>
        </authorList>
    </citation>
    <scope>NUCLEOTIDE SEQUENCE [LARGE SCALE MRNA]</scope>
    <source>
        <tissue>Eye</tissue>
    </source>
</reference>
<reference key="5">
    <citation type="journal article" date="2010" name="Cell">
        <title>A tissue-specific atlas of mouse protein phosphorylation and expression.</title>
        <authorList>
            <person name="Huttlin E.L."/>
            <person name="Jedrychowski M.P."/>
            <person name="Elias J.E."/>
            <person name="Goswami T."/>
            <person name="Rad R."/>
            <person name="Beausoleil S.A."/>
            <person name="Villen J."/>
            <person name="Haas W."/>
            <person name="Sowa M.E."/>
            <person name="Gygi S.P."/>
        </authorList>
    </citation>
    <scope>IDENTIFICATION BY MASS SPECTROMETRY [LARGE SCALE ANALYSIS]</scope>
    <source>
        <tissue>Brain</tissue>
        <tissue>Kidney</tissue>
        <tissue>Testis</tissue>
    </source>
</reference>
<evidence type="ECO:0000250" key="1"/>
<evidence type="ECO:0000255" key="2"/>
<evidence type="ECO:0000255" key="3">
    <source>
        <dbReference type="PROSITE-ProRule" id="PRU10088"/>
    </source>
</evidence>
<evidence type="ECO:0000255" key="4">
    <source>
        <dbReference type="PROSITE-ProRule" id="PRU10089"/>
    </source>
</evidence>
<evidence type="ECO:0000305" key="5"/>
<comment type="function">
    <text>Thiol protease which is believed to participate in intracellular degradation and turnover of proteins. Has also been implicated in tumor invasion and metastasis.</text>
</comment>
<comment type="catalytic activity">
    <reaction>
        <text>The recombinant enzyme cleaves synthetic substrates with Phe and Leu (better than Val) in P2, with high specificity constant (kcat/Km) comparable to that of cathepsin L.</text>
        <dbReference type="EC" id="3.4.22.41"/>
    </reaction>
</comment>
<comment type="subcellular location">
    <subcellularLocation>
        <location>Lysosome</location>
    </subcellularLocation>
</comment>
<comment type="similarity">
    <text evidence="3 4">Belongs to the peptidase C1 family.</text>
</comment>
<organism>
    <name type="scientific">Mus musculus</name>
    <name type="common">Mouse</name>
    <dbReference type="NCBI Taxonomy" id="10090"/>
    <lineage>
        <taxon>Eukaryota</taxon>
        <taxon>Metazoa</taxon>
        <taxon>Chordata</taxon>
        <taxon>Craniata</taxon>
        <taxon>Vertebrata</taxon>
        <taxon>Euteleostomi</taxon>
        <taxon>Mammalia</taxon>
        <taxon>Eutheria</taxon>
        <taxon>Euarchontoglires</taxon>
        <taxon>Glires</taxon>
        <taxon>Rodentia</taxon>
        <taxon>Myomorpha</taxon>
        <taxon>Muroidea</taxon>
        <taxon>Muridae</taxon>
        <taxon>Murinae</taxon>
        <taxon>Mus</taxon>
        <taxon>Mus</taxon>
    </lineage>
</organism>
<accession>Q9R013</accession>
<accession>Q9WUT4</accession>
<protein>
    <recommendedName>
        <fullName>Cathepsin F</fullName>
        <ecNumber>3.4.22.41</ecNumber>
    </recommendedName>
</protein>